<organism evidence="7">
    <name type="scientific">Drosophila pseudoobscura pseudoobscura</name>
    <name type="common">Fruit fly</name>
    <dbReference type="NCBI Taxonomy" id="46245"/>
    <lineage>
        <taxon>Eukaryota</taxon>
        <taxon>Metazoa</taxon>
        <taxon>Ecdysozoa</taxon>
        <taxon>Arthropoda</taxon>
        <taxon>Hexapoda</taxon>
        <taxon>Insecta</taxon>
        <taxon>Pterygota</taxon>
        <taxon>Neoptera</taxon>
        <taxon>Endopterygota</taxon>
        <taxon>Diptera</taxon>
        <taxon>Brachycera</taxon>
        <taxon>Muscomorpha</taxon>
        <taxon>Ephydroidea</taxon>
        <taxon>Drosophilidae</taxon>
        <taxon>Drosophila</taxon>
        <taxon>Sophophora</taxon>
    </lineage>
</organism>
<proteinExistence type="inferred from homology"/>
<sequence>MLTHKTCQARKKMQVSFVIRDAEEKQHRNGVNSLQLDPNNGKLYSAGRDAIIRVWNTRSESSEKYIQSMEHHNDWVNDIVLCCNGRNLISASCDTTVKVWNAQKGFCMSTLRTHRDYVQALAYAKDREQVASAGLDKAIFLWDVNTLTALTASNNTVTTSSLTGSKDSIYSLAMNPSGTVIVSGSTENILRIWDPRTCMRSMKLRGHTENVRCLVVSPDGNQVVSGSSDGTIKVWNLGQQRCVQTIHVHKEGVWSLLMSENFQYIISGSRDQNIIVTEMRNPSNKTLVCEEKAPVLSLGYNMDKTGVWATTWNSDIRCWKLPMYDRGTLNSSGGLDAQWTQGGTELACIKGGAAIKECTVLNDKRYILTKDSQDQVVLYDVLRVVKKDTLGPIDYEAEVKKRNKQVYIPNWFTVDLKTGMPTIVLGQEEVDCFSAWVSIEAGLPECVDPTTEIKINYGKLLLEALLEYWTPPHSIPQNELEPDMHGNGYFQVPKHTPVIFSEVGGRTVCRLLVRDAAGDSECTLLHETAPQWVTDVVIEKNIPKFLKIPFFLQPHPQMTKPERTKKDRLVANEFIQCRKVCEHVLEKVLNAETTPSGANANNSLQNSQSDGNSEGSQLPAEERIELSCNDVVVDPNMDLRTVRHFIWKQSTDLTFQYKTKQNFNYDGSIGDSLERVTRKY</sequence>
<name>WDR48_DROPS</name>
<evidence type="ECO:0000250" key="1"/>
<evidence type="ECO:0000250" key="2">
    <source>
        <dbReference type="UniProtKB" id="Q1LZ08"/>
    </source>
</evidence>
<evidence type="ECO:0000250" key="3">
    <source>
        <dbReference type="UniProtKB" id="Q8TAF3"/>
    </source>
</evidence>
<evidence type="ECO:0000255" key="4"/>
<evidence type="ECO:0000256" key="5">
    <source>
        <dbReference type="SAM" id="MobiDB-lite"/>
    </source>
</evidence>
<evidence type="ECO:0000305" key="6"/>
<evidence type="ECO:0000312" key="7">
    <source>
        <dbReference type="Proteomes" id="UP000001819"/>
    </source>
</evidence>
<accession>Q28YY2</accession>
<dbReference type="EMBL" id="CM000071">
    <property type="protein sequence ID" value="EAL25833.2"/>
    <property type="molecule type" value="Genomic_DNA"/>
</dbReference>
<dbReference type="SMR" id="Q28YY2"/>
<dbReference type="FunCoup" id="Q28YY2">
    <property type="interactions" value="3285"/>
</dbReference>
<dbReference type="STRING" id="46245.Q28YY2"/>
<dbReference type="EnsemblMetazoa" id="FBtr0277877">
    <property type="protein sequence ID" value="FBpp0276315"/>
    <property type="gene ID" value="FBgn0081497"/>
</dbReference>
<dbReference type="KEGG" id="dpo:4804743"/>
<dbReference type="eggNOG" id="KOG0308">
    <property type="taxonomic scope" value="Eukaryota"/>
</dbReference>
<dbReference type="HOGENOM" id="CLU_014960_0_1_1"/>
<dbReference type="InParanoid" id="Q28YY2"/>
<dbReference type="OMA" id="IRHYHIL"/>
<dbReference type="Proteomes" id="UP000001819">
    <property type="component" value="Chromosome 3"/>
</dbReference>
<dbReference type="Bgee" id="FBgn0081497">
    <property type="expression patterns" value="Expressed in female reproductive system and 3 other cell types or tissues"/>
</dbReference>
<dbReference type="GO" id="GO:0043130">
    <property type="term" value="F:ubiquitin binding"/>
    <property type="evidence" value="ECO:0007669"/>
    <property type="project" value="TreeGrafter"/>
</dbReference>
<dbReference type="GO" id="GO:0000724">
    <property type="term" value="P:double-strand break repair via homologous recombination"/>
    <property type="evidence" value="ECO:0007669"/>
    <property type="project" value="TreeGrafter"/>
</dbReference>
<dbReference type="CDD" id="cd17041">
    <property type="entry name" value="Ubl_WDR48"/>
    <property type="match status" value="1"/>
</dbReference>
<dbReference type="CDD" id="cd00200">
    <property type="entry name" value="WD40"/>
    <property type="match status" value="1"/>
</dbReference>
<dbReference type="FunFam" id="2.130.10.10:FF:000543">
    <property type="entry name" value="WD repeat-containing protein 48 homolog"/>
    <property type="match status" value="1"/>
</dbReference>
<dbReference type="FunFam" id="2.130.10.10:FF:000984">
    <property type="entry name" value="WD repeat-containing protein 48 homolog"/>
    <property type="match status" value="1"/>
</dbReference>
<dbReference type="Gene3D" id="2.130.10.10">
    <property type="entry name" value="YVTN repeat-like/Quinoprotein amine dehydrogenase"/>
    <property type="match status" value="2"/>
</dbReference>
<dbReference type="InterPro" id="IPR020472">
    <property type="entry name" value="G-protein_beta_WD-40_rep"/>
</dbReference>
<dbReference type="InterPro" id="IPR015943">
    <property type="entry name" value="WD40/YVTN_repeat-like_dom_sf"/>
</dbReference>
<dbReference type="InterPro" id="IPR019775">
    <property type="entry name" value="WD40_repeat_CS"/>
</dbReference>
<dbReference type="InterPro" id="IPR036322">
    <property type="entry name" value="WD40_repeat_dom_sf"/>
</dbReference>
<dbReference type="InterPro" id="IPR001680">
    <property type="entry name" value="WD40_rpt"/>
</dbReference>
<dbReference type="InterPro" id="IPR051246">
    <property type="entry name" value="WDR48"/>
</dbReference>
<dbReference type="InterPro" id="IPR021772">
    <property type="entry name" value="WDR48/Bun107"/>
</dbReference>
<dbReference type="PANTHER" id="PTHR19862">
    <property type="entry name" value="WD REPEAT-CONTAINING PROTEIN 48"/>
    <property type="match status" value="1"/>
</dbReference>
<dbReference type="PANTHER" id="PTHR19862:SF14">
    <property type="entry name" value="WD REPEAT-CONTAINING PROTEIN 48"/>
    <property type="match status" value="1"/>
</dbReference>
<dbReference type="Pfam" id="PF11816">
    <property type="entry name" value="DUF3337"/>
    <property type="match status" value="1"/>
</dbReference>
<dbReference type="Pfam" id="PF00400">
    <property type="entry name" value="WD40"/>
    <property type="match status" value="6"/>
</dbReference>
<dbReference type="PRINTS" id="PR00320">
    <property type="entry name" value="GPROTEINBRPT"/>
</dbReference>
<dbReference type="SMART" id="SM00320">
    <property type="entry name" value="WD40"/>
    <property type="match status" value="8"/>
</dbReference>
<dbReference type="SUPFAM" id="SSF50978">
    <property type="entry name" value="WD40 repeat-like"/>
    <property type="match status" value="1"/>
</dbReference>
<dbReference type="PROSITE" id="PS00678">
    <property type="entry name" value="WD_REPEATS_1"/>
    <property type="match status" value="4"/>
</dbReference>
<dbReference type="PROSITE" id="PS50082">
    <property type="entry name" value="WD_REPEATS_2"/>
    <property type="match status" value="5"/>
</dbReference>
<dbReference type="PROSITE" id="PS50294">
    <property type="entry name" value="WD_REPEATS_REGION"/>
    <property type="match status" value="5"/>
</dbReference>
<reference key="1">
    <citation type="journal article" date="2005" name="Genome Res.">
        <title>Comparative genome sequencing of Drosophila pseudoobscura: chromosomal, gene, and cis-element evolution.</title>
        <authorList>
            <person name="Richards S."/>
            <person name="Liu Y."/>
            <person name="Bettencourt B.R."/>
            <person name="Hradecky P."/>
            <person name="Letovsky S."/>
            <person name="Nielsen R."/>
            <person name="Thornton K."/>
            <person name="Hubisz M.J."/>
            <person name="Chen R."/>
            <person name="Meisel R.P."/>
            <person name="Couronne O."/>
            <person name="Hua S."/>
            <person name="Smith M.A."/>
            <person name="Zhang P."/>
            <person name="Liu J."/>
            <person name="Bussemaker H.J."/>
            <person name="van Batenburg M.F."/>
            <person name="Howells S.L."/>
            <person name="Scherer S.E."/>
            <person name="Sodergren E."/>
            <person name="Matthews B.B."/>
            <person name="Crosby M.A."/>
            <person name="Schroeder A.J."/>
            <person name="Ortiz-Barrientos D."/>
            <person name="Rives C.M."/>
            <person name="Metzker M.L."/>
            <person name="Muzny D.M."/>
            <person name="Scott G."/>
            <person name="Steffen D."/>
            <person name="Wheeler D.A."/>
            <person name="Worley K.C."/>
            <person name="Havlak P."/>
            <person name="Durbin K.J."/>
            <person name="Egan A."/>
            <person name="Gill R."/>
            <person name="Hume J."/>
            <person name="Morgan M.B."/>
            <person name="Miner G."/>
            <person name="Hamilton C."/>
            <person name="Huang Y."/>
            <person name="Waldron L."/>
            <person name="Verduzco D."/>
            <person name="Clerc-Blankenburg K.P."/>
            <person name="Dubchak I."/>
            <person name="Noor M.A.F."/>
            <person name="Anderson W."/>
            <person name="White K.P."/>
            <person name="Clark A.G."/>
            <person name="Schaeffer S.W."/>
            <person name="Gelbart W.M."/>
            <person name="Weinstock G.M."/>
            <person name="Gibbs R.A."/>
        </authorList>
    </citation>
    <scope>NUCLEOTIDE SEQUENCE [LARGE SCALE GENOMIC DNA]</scope>
    <source>
        <strain>MV2-25 / Tucson 14011-0121.94</strain>
    </source>
</reference>
<feature type="chain" id="PRO_0000378984" description="WD repeat-containing protein 48 homolog">
    <location>
        <begin position="1"/>
        <end position="680"/>
    </location>
</feature>
<feature type="repeat" description="WD 1" evidence="4">
    <location>
        <begin position="26"/>
        <end position="65"/>
    </location>
</feature>
<feature type="repeat" description="WD 2" evidence="4">
    <location>
        <begin position="71"/>
        <end position="110"/>
    </location>
</feature>
<feature type="repeat" description="WD 3" evidence="4">
    <location>
        <begin position="113"/>
        <end position="152"/>
    </location>
</feature>
<feature type="repeat" description="WD 4" evidence="4">
    <location>
        <begin position="164"/>
        <end position="203"/>
    </location>
</feature>
<feature type="repeat" description="WD 5" evidence="4">
    <location>
        <begin position="206"/>
        <end position="245"/>
    </location>
</feature>
<feature type="repeat" description="WD 6" evidence="4">
    <location>
        <begin position="248"/>
        <end position="287"/>
    </location>
</feature>
<feature type="repeat" description="WD 7" evidence="4">
    <location>
        <begin position="290"/>
        <end position="329"/>
    </location>
</feature>
<feature type="repeat" description="WD 8" evidence="4">
    <location>
        <begin position="350"/>
        <end position="389"/>
    </location>
</feature>
<feature type="region of interest" description="Disordered" evidence="5">
    <location>
        <begin position="594"/>
        <end position="618"/>
    </location>
</feature>
<feature type="compositionally biased region" description="Low complexity" evidence="5">
    <location>
        <begin position="596"/>
        <end position="609"/>
    </location>
</feature>
<protein>
    <recommendedName>
        <fullName>WD repeat-containing protein 48 homolog</fullName>
    </recommendedName>
</protein>
<gene>
    <name evidence="2" type="primary">Uaf1</name>
    <name type="ORF">GA21511</name>
</gene>
<comment type="function">
    <text evidence="1 2 3">Regulatory component of the Usp12-46 deubiquitylase complex (By similarity). activates deubiquitination by increasing the catalytic turnover without increasing the affinity of deubiquitinating enzymes for the substrate (By similarity). The complex deubiquitylates the wg/wingless-signaling receptor arr/arrow, which stabilizes the receptor and increases its concentration at the cell surface; this enhances the sensitivity of cells to wg/wingless-signal stimulation. This increases the amplitude and spatial range of the signaling response to the wg/wingless morphogen gradient, facilitating the precise concentration-dependent regulation of its target genes. Together with Wdr20 and Usp12-46 required for wg/wingless-mediated signaling in the wing imaginal disc and for wg/wingless-dependent regulation of intestinal stem cell proliferation (By similarity).</text>
</comment>
<comment type="subunit">
    <text evidence="2">Catalytic component of the Usp12-46 deubiquitylase complex consisting of Usp12-46, Wdr20 and Uaf1; regulatory subunit that, together wtih Wdr20, stabilizes Usp12-46. The Usp12-46 deubiquitylase complex associates with arr/arrow; the interaction leads to deubiquitination and stabilization of arr/arrow.</text>
</comment>
<comment type="similarity">
    <text evidence="6">Belongs to the WD repeat WDR48 family.</text>
</comment>
<keyword id="KW-1185">Reference proteome</keyword>
<keyword id="KW-0677">Repeat</keyword>
<keyword id="KW-0833">Ubl conjugation pathway</keyword>
<keyword id="KW-0853">WD repeat</keyword>